<comment type="function">
    <text evidence="1">Catalyzes the dephosphorylation of undecaprenyl diphosphate (UPP). Confers resistance to bacitracin.</text>
</comment>
<comment type="catalytic activity">
    <reaction evidence="1">
        <text>di-trans,octa-cis-undecaprenyl diphosphate + H2O = di-trans,octa-cis-undecaprenyl phosphate + phosphate + H(+)</text>
        <dbReference type="Rhea" id="RHEA:28094"/>
        <dbReference type="ChEBI" id="CHEBI:15377"/>
        <dbReference type="ChEBI" id="CHEBI:15378"/>
        <dbReference type="ChEBI" id="CHEBI:43474"/>
        <dbReference type="ChEBI" id="CHEBI:58405"/>
        <dbReference type="ChEBI" id="CHEBI:60392"/>
        <dbReference type="EC" id="3.6.1.27"/>
    </reaction>
</comment>
<comment type="subcellular location">
    <subcellularLocation>
        <location evidence="1">Cell inner membrane</location>
        <topology evidence="1">Multi-pass membrane protein</topology>
    </subcellularLocation>
</comment>
<comment type="miscellaneous">
    <text>Bacitracin is thought to be involved in the inhibition of peptidoglycan synthesis by sequestering undecaprenyl diphosphate, thereby reducing the pool of lipid carrier available.</text>
</comment>
<comment type="similarity">
    <text evidence="1">Belongs to the UppP family.</text>
</comment>
<sequence length="266" mass="29402">MNIFQTIVLALVQGLSEFLPISSSAHLILVPELTNWTDQSLAFDVVVHMGTLSAVIFYYQAMIKCLFFDFYHSIIKRQTIGESKLAWGVLLGTIPVGLVGMIFRDSIATDLRSVEIIAYATLVFGVLLGFASWFSHRNKNQKSTISWVDIGFIGMAQTLALIPGTSRSGITITACMLVGLSRKLSIQFAFLLSIPVISLSLILILIDLYHQAQLVNVSLLAMGFVVAAISAYVTIVFFIKLIDAVGMMPFVIYRLTLGIFLFFFIL</sequence>
<dbReference type="EC" id="3.6.1.27" evidence="1"/>
<dbReference type="EMBL" id="CP000488">
    <property type="protein sequence ID" value="ABL02198.1"/>
    <property type="molecule type" value="Genomic_DNA"/>
</dbReference>
<dbReference type="RefSeq" id="WP_011737823.1">
    <property type="nucleotide sequence ID" value="NC_008610.1"/>
</dbReference>
<dbReference type="SMR" id="A1AW91"/>
<dbReference type="STRING" id="413404.Rmag_0439"/>
<dbReference type="KEGG" id="rma:Rmag_0439"/>
<dbReference type="eggNOG" id="COG1968">
    <property type="taxonomic scope" value="Bacteria"/>
</dbReference>
<dbReference type="HOGENOM" id="CLU_060296_1_0_6"/>
<dbReference type="OrthoDB" id="9808289at2"/>
<dbReference type="Proteomes" id="UP000002587">
    <property type="component" value="Chromosome"/>
</dbReference>
<dbReference type="GO" id="GO:0005886">
    <property type="term" value="C:plasma membrane"/>
    <property type="evidence" value="ECO:0007669"/>
    <property type="project" value="UniProtKB-SubCell"/>
</dbReference>
<dbReference type="GO" id="GO:0050380">
    <property type="term" value="F:undecaprenyl-diphosphatase activity"/>
    <property type="evidence" value="ECO:0007669"/>
    <property type="project" value="UniProtKB-UniRule"/>
</dbReference>
<dbReference type="GO" id="GO:0071555">
    <property type="term" value="P:cell wall organization"/>
    <property type="evidence" value="ECO:0007669"/>
    <property type="project" value="UniProtKB-KW"/>
</dbReference>
<dbReference type="GO" id="GO:0009252">
    <property type="term" value="P:peptidoglycan biosynthetic process"/>
    <property type="evidence" value="ECO:0007669"/>
    <property type="project" value="UniProtKB-KW"/>
</dbReference>
<dbReference type="GO" id="GO:0008360">
    <property type="term" value="P:regulation of cell shape"/>
    <property type="evidence" value="ECO:0007669"/>
    <property type="project" value="UniProtKB-KW"/>
</dbReference>
<dbReference type="GO" id="GO:0046677">
    <property type="term" value="P:response to antibiotic"/>
    <property type="evidence" value="ECO:0007669"/>
    <property type="project" value="UniProtKB-UniRule"/>
</dbReference>
<dbReference type="HAMAP" id="MF_01006">
    <property type="entry name" value="Undec_diphosphatase"/>
    <property type="match status" value="1"/>
</dbReference>
<dbReference type="InterPro" id="IPR003824">
    <property type="entry name" value="UppP"/>
</dbReference>
<dbReference type="NCBIfam" id="NF001393">
    <property type="entry name" value="PRK00281.2-4"/>
    <property type="match status" value="1"/>
</dbReference>
<dbReference type="PANTHER" id="PTHR30622">
    <property type="entry name" value="UNDECAPRENYL-DIPHOSPHATASE"/>
    <property type="match status" value="1"/>
</dbReference>
<dbReference type="PANTHER" id="PTHR30622:SF4">
    <property type="entry name" value="UNDECAPRENYL-DIPHOSPHATASE"/>
    <property type="match status" value="1"/>
</dbReference>
<dbReference type="Pfam" id="PF02673">
    <property type="entry name" value="BacA"/>
    <property type="match status" value="1"/>
</dbReference>
<protein>
    <recommendedName>
        <fullName evidence="1">Undecaprenyl-diphosphatase</fullName>
        <ecNumber evidence="1">3.6.1.27</ecNumber>
    </recommendedName>
    <alternativeName>
        <fullName evidence="1">Bacitracin resistance protein</fullName>
    </alternativeName>
    <alternativeName>
        <fullName evidence="1">Undecaprenyl pyrophosphate phosphatase</fullName>
    </alternativeName>
</protein>
<reference key="1">
    <citation type="journal article" date="2007" name="Science">
        <title>The Calyptogena magnifica chemoautotrophic symbiont genome.</title>
        <authorList>
            <person name="Newton I.L.G."/>
            <person name="Woyke T."/>
            <person name="Auchtung T.A."/>
            <person name="Dilly G.F."/>
            <person name="Dutton R.J."/>
            <person name="Fisher M.C."/>
            <person name="Fontanez K.M."/>
            <person name="Lau E."/>
            <person name="Stewart F.J."/>
            <person name="Richardson P.M."/>
            <person name="Barry K.W."/>
            <person name="Saunders E."/>
            <person name="Detter J.C."/>
            <person name="Wu D."/>
            <person name="Eisen J.A."/>
            <person name="Cavanaugh C.M."/>
        </authorList>
    </citation>
    <scope>NUCLEOTIDE SEQUENCE [LARGE SCALE GENOMIC DNA]</scope>
</reference>
<evidence type="ECO:0000255" key="1">
    <source>
        <dbReference type="HAMAP-Rule" id="MF_01006"/>
    </source>
</evidence>
<proteinExistence type="inferred from homology"/>
<name>UPPP_RUTMC</name>
<feature type="chain" id="PRO_0000290758" description="Undecaprenyl-diphosphatase">
    <location>
        <begin position="1"/>
        <end position="266"/>
    </location>
</feature>
<feature type="transmembrane region" description="Helical" evidence="1">
    <location>
        <begin position="1"/>
        <end position="21"/>
    </location>
</feature>
<feature type="transmembrane region" description="Helical" evidence="1">
    <location>
        <begin position="43"/>
        <end position="63"/>
    </location>
</feature>
<feature type="transmembrane region" description="Helical" evidence="1">
    <location>
        <begin position="83"/>
        <end position="103"/>
    </location>
</feature>
<feature type="transmembrane region" description="Helical" evidence="1">
    <location>
        <begin position="114"/>
        <end position="134"/>
    </location>
</feature>
<feature type="transmembrane region" description="Helical" evidence="1">
    <location>
        <begin position="144"/>
        <end position="164"/>
    </location>
</feature>
<feature type="transmembrane region" description="Helical" evidence="1">
    <location>
        <begin position="186"/>
        <end position="206"/>
    </location>
</feature>
<feature type="transmembrane region" description="Helical" evidence="1">
    <location>
        <begin position="219"/>
        <end position="239"/>
    </location>
</feature>
<feature type="transmembrane region" description="Helical" evidence="1">
    <location>
        <begin position="245"/>
        <end position="265"/>
    </location>
</feature>
<organism>
    <name type="scientific">Ruthia magnifica subsp. Calyptogena magnifica</name>
    <dbReference type="NCBI Taxonomy" id="413404"/>
    <lineage>
        <taxon>Bacteria</taxon>
        <taxon>Pseudomonadati</taxon>
        <taxon>Pseudomonadota</taxon>
        <taxon>Gammaproteobacteria</taxon>
        <taxon>Candidatus Pseudothioglobaceae</taxon>
        <taxon>Candidatus Ruthturnera</taxon>
    </lineage>
</organism>
<keyword id="KW-0046">Antibiotic resistance</keyword>
<keyword id="KW-0997">Cell inner membrane</keyword>
<keyword id="KW-1003">Cell membrane</keyword>
<keyword id="KW-0133">Cell shape</keyword>
<keyword id="KW-0961">Cell wall biogenesis/degradation</keyword>
<keyword id="KW-0378">Hydrolase</keyword>
<keyword id="KW-0472">Membrane</keyword>
<keyword id="KW-0573">Peptidoglycan synthesis</keyword>
<keyword id="KW-0812">Transmembrane</keyword>
<keyword id="KW-1133">Transmembrane helix</keyword>
<accession>A1AW91</accession>
<gene>
    <name evidence="1" type="primary">uppP</name>
    <name type="ordered locus">Rmag_0439</name>
</gene>